<protein>
    <recommendedName>
        <fullName evidence="1">UPF0297 protein LMHCC_1066</fullName>
    </recommendedName>
</protein>
<sequence length="90" mass="10544">MDSKDQTMFYNFGDDSIEEDVKKLMKQVYVALEEKGYNPVNQIVGYLLSGDPAYIPRHKDARSMIRRLERDEIIEELVKAYLKNNEIGEK</sequence>
<name>Y1066_LISMH</name>
<gene>
    <name type="ordered locus">LMHCC_1066</name>
</gene>
<comment type="similarity">
    <text evidence="1">Belongs to the UPF0297 family.</text>
</comment>
<reference key="1">
    <citation type="journal article" date="2011" name="J. Bacteriol.">
        <title>Genome sequence of lineage III Listeria monocytogenes strain HCC23.</title>
        <authorList>
            <person name="Steele C.L."/>
            <person name="Donaldson J.R."/>
            <person name="Paul D."/>
            <person name="Banes M.M."/>
            <person name="Arick T."/>
            <person name="Bridges S.M."/>
            <person name="Lawrence M.L."/>
        </authorList>
    </citation>
    <scope>NUCLEOTIDE SEQUENCE [LARGE SCALE GENOMIC DNA]</scope>
    <source>
        <strain>HCC23</strain>
    </source>
</reference>
<feature type="chain" id="PRO_1000185043" description="UPF0297 protein LMHCC_1066">
    <location>
        <begin position="1"/>
        <end position="90"/>
    </location>
</feature>
<dbReference type="EMBL" id="CP001175">
    <property type="protein sequence ID" value="ACK39414.1"/>
    <property type="molecule type" value="Genomic_DNA"/>
</dbReference>
<dbReference type="SMR" id="B8DE07"/>
<dbReference type="KEGG" id="lmh:LMHCC_1066"/>
<dbReference type="HOGENOM" id="CLU_162466_0_0_9"/>
<dbReference type="HAMAP" id="MF_01507">
    <property type="entry name" value="UPF0297"/>
    <property type="match status" value="1"/>
</dbReference>
<dbReference type="InterPro" id="IPR009309">
    <property type="entry name" value="IreB"/>
</dbReference>
<dbReference type="NCBIfam" id="NF003997">
    <property type="entry name" value="PRK05473.1"/>
    <property type="match status" value="1"/>
</dbReference>
<dbReference type="PANTHER" id="PTHR40067">
    <property type="entry name" value="UPF0297 PROTEIN YRZL"/>
    <property type="match status" value="1"/>
</dbReference>
<dbReference type="PANTHER" id="PTHR40067:SF1">
    <property type="entry name" value="UPF0297 PROTEIN YRZL"/>
    <property type="match status" value="1"/>
</dbReference>
<dbReference type="Pfam" id="PF06135">
    <property type="entry name" value="IreB"/>
    <property type="match status" value="1"/>
</dbReference>
<dbReference type="PIRSF" id="PIRSF037258">
    <property type="entry name" value="DUF965_bac"/>
    <property type="match status" value="1"/>
</dbReference>
<evidence type="ECO:0000255" key="1">
    <source>
        <dbReference type="HAMAP-Rule" id="MF_01507"/>
    </source>
</evidence>
<proteinExistence type="inferred from homology"/>
<accession>B8DE07</accession>
<organism>
    <name type="scientific">Listeria monocytogenes serotype 4a (strain HCC23)</name>
    <dbReference type="NCBI Taxonomy" id="552536"/>
    <lineage>
        <taxon>Bacteria</taxon>
        <taxon>Bacillati</taxon>
        <taxon>Bacillota</taxon>
        <taxon>Bacilli</taxon>
        <taxon>Bacillales</taxon>
        <taxon>Listeriaceae</taxon>
        <taxon>Listeria</taxon>
    </lineage>
</organism>